<feature type="chain" id="PRO_0000086266" description="Mitogen-activated protein kinase kinase kinase 14">
    <location>
        <begin position="1"/>
        <end position="947"/>
    </location>
</feature>
<feature type="domain" description="Protein kinase" evidence="3">
    <location>
        <begin position="400"/>
        <end position="655"/>
    </location>
</feature>
<feature type="region of interest" description="Disordered" evidence="5">
    <location>
        <begin position="1"/>
        <end position="37"/>
    </location>
</feature>
<feature type="region of interest" description="Disordered" evidence="5">
    <location>
        <begin position="135"/>
        <end position="171"/>
    </location>
</feature>
<feature type="region of interest" description="Interaction with ZFP91" evidence="14">
    <location>
        <begin position="401"/>
        <end position="653"/>
    </location>
</feature>
<feature type="region of interest" description="Disordered" evidence="5">
    <location>
        <begin position="662"/>
        <end position="766"/>
    </location>
</feature>
<feature type="region of interest" description="Disordered" evidence="5">
    <location>
        <begin position="805"/>
        <end position="830"/>
    </location>
</feature>
<feature type="compositionally biased region" description="Basic residues" evidence="5">
    <location>
        <begin position="135"/>
        <end position="151"/>
    </location>
</feature>
<feature type="compositionally biased region" description="Basic and acidic residues" evidence="5">
    <location>
        <begin position="665"/>
        <end position="674"/>
    </location>
</feature>
<feature type="compositionally biased region" description="Pro residues" evidence="5">
    <location>
        <begin position="713"/>
        <end position="727"/>
    </location>
</feature>
<feature type="compositionally biased region" description="Low complexity" evidence="5">
    <location>
        <begin position="741"/>
        <end position="752"/>
    </location>
</feature>
<feature type="compositionally biased region" description="Polar residues" evidence="5">
    <location>
        <begin position="814"/>
        <end position="829"/>
    </location>
</feature>
<feature type="active site" description="Proton acceptor" evidence="3 4">
    <location>
        <position position="515"/>
    </location>
</feature>
<feature type="binding site" evidence="3">
    <location>
        <begin position="406"/>
        <end position="414"/>
    </location>
    <ligand>
        <name>ATP</name>
        <dbReference type="ChEBI" id="CHEBI:30616"/>
    </ligand>
</feature>
<feature type="binding site" evidence="3">
    <location>
        <position position="429"/>
    </location>
    <ligand>
        <name>ATP</name>
        <dbReference type="ChEBI" id="CHEBI:30616"/>
    </ligand>
</feature>
<feature type="modified residue" description="Phosphothreonine" evidence="14">
    <location>
        <position position="559"/>
    </location>
</feature>
<feature type="sequence variant" id="VAR_040711" description="In dbSNP:rs11574819." evidence="12">
    <original>S</original>
    <variation>N</variation>
    <location>
        <position position="140"/>
    </location>
</feature>
<feature type="sequence variant" id="VAR_051641" description="In dbSNP:rs11574820.">
    <original>T</original>
    <variation>M</variation>
    <location>
        <position position="255"/>
    </location>
</feature>
<feature type="sequence variant" id="VAR_088815" description="In IMD112; uncertain significance; decreased phosphorylation of CHUK/IKKA." evidence="16">
    <original>V</original>
    <variation>M</variation>
    <location>
        <position position="345"/>
    </location>
</feature>
<feature type="sequence variant" id="VAR_040712" description="In a lung neuroendocrine carcinoma sample; somatic mutation; requires 2 nucleotide substitutions." evidence="12">
    <original>G</original>
    <variation>K</variation>
    <location>
        <position position="514"/>
    </location>
</feature>
<feature type="sequence variant" id="VAR_088816" description="In IMD112; likely pathogenic; loss of function in non-canonical NF-kappaB signal transduction; unable to phosphorylate CHUK/IKKA." evidence="15">
    <original>P</original>
    <variation>R</variation>
    <location>
        <position position="565"/>
    </location>
</feature>
<feature type="sequence variant" id="VAR_051642" description="In dbSNP:rs11867907.">
    <original>H</original>
    <variation>Y</variation>
    <location>
        <position position="674"/>
    </location>
</feature>
<feature type="sequence variant" id="VAR_040713" description="In dbSNP:rs56302559." evidence="12">
    <original>T</original>
    <variation>A</variation>
    <location>
        <position position="764"/>
    </location>
</feature>
<feature type="sequence variant" id="VAR_040714" description="In an ovarian mucinous carcinoma sample; somatic mutation." evidence="12">
    <original>T</original>
    <variation>I</variation>
    <location>
        <position position="852"/>
    </location>
</feature>
<feature type="sequence variant" id="VAR_040715" description="In dbSNP:rs56036201." evidence="12">
    <original>P</original>
    <variation>H</variation>
    <location>
        <position position="928"/>
    </location>
</feature>
<feature type="mutagenesis site" description="Loss of autophosphorylation and 'Lys-63'-linked ubiquitination. Unable to phosphorylate CHUK/IKKA." evidence="14 15 18">
    <original>KK</original>
    <variation>AA</variation>
    <location>
        <begin position="429"/>
        <end position="430"/>
    </location>
</feature>
<feature type="mutagenesis site" description="Abolishes 'Lys-63'-linked ubiquitination." evidence="14">
    <original>T</original>
    <variation>A</variation>
    <location>
        <position position="559"/>
    </location>
</feature>
<feature type="sequence conflict" description="In Ref. 1; CAA71306." evidence="21" ref="1">
    <original>A</original>
    <variation>P</variation>
    <location>
        <position position="25"/>
    </location>
</feature>
<feature type="sequence conflict" description="In Ref. 1; CAA71306." evidence="21" ref="1">
    <original>G</original>
    <variation>S</variation>
    <location>
        <position position="348"/>
    </location>
</feature>
<feature type="sequence conflict" description="In Ref. 2; BAF82892." evidence="21" ref="2">
    <original>R</original>
    <variation>G</variation>
    <location>
        <position position="880"/>
    </location>
</feature>
<feature type="helix" evidence="24">
    <location>
        <begin position="335"/>
        <end position="341"/>
    </location>
</feature>
<feature type="strand" evidence="24">
    <location>
        <begin position="345"/>
        <end position="347"/>
    </location>
</feature>
<feature type="helix" evidence="24">
    <location>
        <begin position="350"/>
        <end position="363"/>
    </location>
</feature>
<feature type="strand" evidence="24">
    <location>
        <begin position="364"/>
        <end position="366"/>
    </location>
</feature>
<feature type="strand" evidence="24">
    <location>
        <begin position="377"/>
        <end position="381"/>
    </location>
</feature>
<feature type="turn" evidence="24">
    <location>
        <begin position="395"/>
        <end position="397"/>
    </location>
</feature>
<feature type="strand" evidence="24">
    <location>
        <begin position="398"/>
        <end position="408"/>
    </location>
</feature>
<feature type="strand" evidence="24">
    <location>
        <begin position="410"/>
        <end position="419"/>
    </location>
</feature>
<feature type="turn" evidence="24">
    <location>
        <begin position="420"/>
        <end position="422"/>
    </location>
</feature>
<feature type="strand" evidence="24">
    <location>
        <begin position="425"/>
        <end position="432"/>
    </location>
</feature>
<feature type="helix" evidence="24">
    <location>
        <begin position="433"/>
        <end position="435"/>
    </location>
</feature>
<feature type="helix" evidence="24">
    <location>
        <begin position="439"/>
        <end position="442"/>
    </location>
</feature>
<feature type="turn" evidence="24">
    <location>
        <begin position="443"/>
        <end position="446"/>
    </location>
</feature>
<feature type="strand" evidence="24">
    <location>
        <begin position="455"/>
        <end position="461"/>
    </location>
</feature>
<feature type="strand" evidence="24">
    <location>
        <begin position="464"/>
        <end position="469"/>
    </location>
</feature>
<feature type="helix" evidence="24">
    <location>
        <begin position="477"/>
        <end position="484"/>
    </location>
</feature>
<feature type="helix" evidence="24">
    <location>
        <begin position="489"/>
        <end position="507"/>
    </location>
</feature>
<feature type="turn" evidence="24">
    <location>
        <begin position="508"/>
        <end position="510"/>
    </location>
</feature>
<feature type="helix" evidence="24">
    <location>
        <begin position="518"/>
        <end position="520"/>
    </location>
</feature>
<feature type="strand" evidence="24">
    <location>
        <begin position="521"/>
        <end position="523"/>
    </location>
</feature>
<feature type="strand" evidence="24">
    <location>
        <begin position="530"/>
        <end position="532"/>
    </location>
</feature>
<feature type="helix" evidence="25">
    <location>
        <begin position="535"/>
        <end position="537"/>
    </location>
</feature>
<feature type="strand" evidence="23">
    <location>
        <begin position="543"/>
        <end position="547"/>
    </location>
</feature>
<feature type="turn" evidence="23">
    <location>
        <begin position="550"/>
        <end position="553"/>
    </location>
</feature>
<feature type="helix" evidence="24">
    <location>
        <begin position="560"/>
        <end position="562"/>
    </location>
</feature>
<feature type="helix" evidence="24">
    <location>
        <begin position="565"/>
        <end position="568"/>
    </location>
</feature>
<feature type="helix" evidence="24">
    <location>
        <begin position="576"/>
        <end position="591"/>
    </location>
</feature>
<feature type="turn" evidence="24">
    <location>
        <begin position="595"/>
        <end position="599"/>
    </location>
</feature>
<feature type="helix" evidence="24">
    <location>
        <begin position="605"/>
        <end position="610"/>
    </location>
</feature>
<feature type="helix" evidence="24">
    <location>
        <begin position="614"/>
        <end position="617"/>
    </location>
</feature>
<feature type="helix" evidence="24">
    <location>
        <begin position="624"/>
        <end position="633"/>
    </location>
</feature>
<feature type="turn" evidence="24">
    <location>
        <begin position="638"/>
        <end position="640"/>
    </location>
</feature>
<feature type="helix" evidence="24">
    <location>
        <begin position="644"/>
        <end position="658"/>
    </location>
</feature>
<name>M3K14_HUMAN</name>
<reference key="1">
    <citation type="journal article" date="1997" name="Nature">
        <title>MAP3K-related kinase involved in NF-kappaB induction by TNF, CD95 and IL-1.</title>
        <authorList>
            <person name="Malinin N.L."/>
            <person name="Boldin M.P."/>
            <person name="Kovalenko A.V."/>
            <person name="Wallach D."/>
        </authorList>
    </citation>
    <scope>NUCLEOTIDE SEQUENCE [MRNA]</scope>
    <scope>MUTAGENESIS OF 429-LYS-LYS-430</scope>
    <scope>TISSUE SPECIFICITY</scope>
</reference>
<reference key="2">
    <citation type="journal article" date="2004" name="Nat. Genet.">
        <title>Complete sequencing and characterization of 21,243 full-length human cDNAs.</title>
        <authorList>
            <person name="Ota T."/>
            <person name="Suzuki Y."/>
            <person name="Nishikawa T."/>
            <person name="Otsuki T."/>
            <person name="Sugiyama T."/>
            <person name="Irie R."/>
            <person name="Wakamatsu A."/>
            <person name="Hayashi K."/>
            <person name="Sato H."/>
            <person name="Nagai K."/>
            <person name="Kimura K."/>
            <person name="Makita H."/>
            <person name="Sekine M."/>
            <person name="Obayashi M."/>
            <person name="Nishi T."/>
            <person name="Shibahara T."/>
            <person name="Tanaka T."/>
            <person name="Ishii S."/>
            <person name="Yamamoto J."/>
            <person name="Saito K."/>
            <person name="Kawai Y."/>
            <person name="Isono Y."/>
            <person name="Nakamura Y."/>
            <person name="Nagahari K."/>
            <person name="Murakami K."/>
            <person name="Yasuda T."/>
            <person name="Iwayanagi T."/>
            <person name="Wagatsuma M."/>
            <person name="Shiratori A."/>
            <person name="Sudo H."/>
            <person name="Hosoiri T."/>
            <person name="Kaku Y."/>
            <person name="Kodaira H."/>
            <person name="Kondo H."/>
            <person name="Sugawara M."/>
            <person name="Takahashi M."/>
            <person name="Kanda K."/>
            <person name="Yokoi T."/>
            <person name="Furuya T."/>
            <person name="Kikkawa E."/>
            <person name="Omura Y."/>
            <person name="Abe K."/>
            <person name="Kamihara K."/>
            <person name="Katsuta N."/>
            <person name="Sato K."/>
            <person name="Tanikawa M."/>
            <person name="Yamazaki M."/>
            <person name="Ninomiya K."/>
            <person name="Ishibashi T."/>
            <person name="Yamashita H."/>
            <person name="Murakawa K."/>
            <person name="Fujimori K."/>
            <person name="Tanai H."/>
            <person name="Kimata M."/>
            <person name="Watanabe M."/>
            <person name="Hiraoka S."/>
            <person name="Chiba Y."/>
            <person name="Ishida S."/>
            <person name="Ono Y."/>
            <person name="Takiguchi S."/>
            <person name="Watanabe S."/>
            <person name="Yosida M."/>
            <person name="Hotuta T."/>
            <person name="Kusano J."/>
            <person name="Kanehori K."/>
            <person name="Takahashi-Fujii A."/>
            <person name="Hara H."/>
            <person name="Tanase T.-O."/>
            <person name="Nomura Y."/>
            <person name="Togiya S."/>
            <person name="Komai F."/>
            <person name="Hara R."/>
            <person name="Takeuchi K."/>
            <person name="Arita M."/>
            <person name="Imose N."/>
            <person name="Musashino K."/>
            <person name="Yuuki H."/>
            <person name="Oshima A."/>
            <person name="Sasaki N."/>
            <person name="Aotsuka S."/>
            <person name="Yoshikawa Y."/>
            <person name="Matsunawa H."/>
            <person name="Ichihara T."/>
            <person name="Shiohata N."/>
            <person name="Sano S."/>
            <person name="Moriya S."/>
            <person name="Momiyama H."/>
            <person name="Satoh N."/>
            <person name="Takami S."/>
            <person name="Terashima Y."/>
            <person name="Suzuki O."/>
            <person name="Nakagawa S."/>
            <person name="Senoh A."/>
            <person name="Mizoguchi H."/>
            <person name="Goto Y."/>
            <person name="Shimizu F."/>
            <person name="Wakebe H."/>
            <person name="Hishigaki H."/>
            <person name="Watanabe T."/>
            <person name="Sugiyama A."/>
            <person name="Takemoto M."/>
            <person name="Kawakami B."/>
            <person name="Yamazaki M."/>
            <person name="Watanabe K."/>
            <person name="Kumagai A."/>
            <person name="Itakura S."/>
            <person name="Fukuzumi Y."/>
            <person name="Fujimori Y."/>
            <person name="Komiyama M."/>
            <person name="Tashiro H."/>
            <person name="Tanigami A."/>
            <person name="Fujiwara T."/>
            <person name="Ono T."/>
            <person name="Yamada K."/>
            <person name="Fujii Y."/>
            <person name="Ozaki K."/>
            <person name="Hirao M."/>
            <person name="Ohmori Y."/>
            <person name="Kawabata A."/>
            <person name="Hikiji T."/>
            <person name="Kobatake N."/>
            <person name="Inagaki H."/>
            <person name="Ikema Y."/>
            <person name="Okamoto S."/>
            <person name="Okitani R."/>
            <person name="Kawakami T."/>
            <person name="Noguchi S."/>
            <person name="Itoh T."/>
            <person name="Shigeta K."/>
            <person name="Senba T."/>
            <person name="Matsumura K."/>
            <person name="Nakajima Y."/>
            <person name="Mizuno T."/>
            <person name="Morinaga M."/>
            <person name="Sasaki M."/>
            <person name="Togashi T."/>
            <person name="Oyama M."/>
            <person name="Hata H."/>
            <person name="Watanabe M."/>
            <person name="Komatsu T."/>
            <person name="Mizushima-Sugano J."/>
            <person name="Satoh T."/>
            <person name="Shirai Y."/>
            <person name="Takahashi Y."/>
            <person name="Nakagawa K."/>
            <person name="Okumura K."/>
            <person name="Nagase T."/>
            <person name="Nomura N."/>
            <person name="Kikuchi H."/>
            <person name="Masuho Y."/>
            <person name="Yamashita R."/>
            <person name="Nakai K."/>
            <person name="Yada T."/>
            <person name="Nakamura Y."/>
            <person name="Ohara O."/>
            <person name="Isogai T."/>
            <person name="Sugano S."/>
        </authorList>
    </citation>
    <scope>NUCLEOTIDE SEQUENCE [LARGE SCALE MRNA]</scope>
    <source>
        <tissue>Thalamus</tissue>
    </source>
</reference>
<reference key="3">
    <citation type="submission" date="2005-12" db="EMBL/GenBank/DDBJ databases">
        <authorList>
            <consortium name="NHLBI resequencing and genotyping service (RS&amp;G)"/>
        </authorList>
    </citation>
    <scope>NUCLEOTIDE SEQUENCE [GENOMIC DNA]</scope>
</reference>
<reference key="4">
    <citation type="submission" date="2005-09" db="EMBL/GenBank/DDBJ databases">
        <authorList>
            <person name="Mural R.J."/>
            <person name="Istrail S."/>
            <person name="Sutton G.G."/>
            <person name="Florea L."/>
            <person name="Halpern A.L."/>
            <person name="Mobarry C.M."/>
            <person name="Lippert R."/>
            <person name="Walenz B."/>
            <person name="Shatkay H."/>
            <person name="Dew I."/>
            <person name="Miller J.R."/>
            <person name="Flanigan M.J."/>
            <person name="Edwards N.J."/>
            <person name="Bolanos R."/>
            <person name="Fasulo D."/>
            <person name="Halldorsson B.V."/>
            <person name="Hannenhalli S."/>
            <person name="Turner R."/>
            <person name="Yooseph S."/>
            <person name="Lu F."/>
            <person name="Nusskern D.R."/>
            <person name="Shue B.C."/>
            <person name="Zheng X.H."/>
            <person name="Zhong F."/>
            <person name="Delcher A.L."/>
            <person name="Huson D.H."/>
            <person name="Kravitz S.A."/>
            <person name="Mouchard L."/>
            <person name="Reinert K."/>
            <person name="Remington K.A."/>
            <person name="Clark A.G."/>
            <person name="Waterman M.S."/>
            <person name="Eichler E.E."/>
            <person name="Adams M.D."/>
            <person name="Hunkapiller M.W."/>
            <person name="Myers E.W."/>
            <person name="Venter J.C."/>
        </authorList>
    </citation>
    <scope>NUCLEOTIDE SEQUENCE [LARGE SCALE GENOMIC DNA]</scope>
</reference>
<reference key="5">
    <citation type="journal article" date="2004" name="Genome Res.">
        <title>The status, quality, and expansion of the NIH full-length cDNA project: the Mammalian Gene Collection (MGC).</title>
        <authorList>
            <consortium name="The MGC Project Team"/>
        </authorList>
    </citation>
    <scope>NUCLEOTIDE SEQUENCE [LARGE SCALE MRNA]</scope>
    <source>
        <tissue>Lymph</tissue>
    </source>
</reference>
<reference key="6">
    <citation type="journal article" date="2003" name="J. Immunol.">
        <title>Pellino3, a novel member of the Pellino protein family, promotes activation of c-Jun and Elk-1 and may act as a scaffolding protein.</title>
        <authorList>
            <person name="Jensen L.E."/>
            <person name="Whitehead A.S."/>
        </authorList>
    </citation>
    <scope>INTERACTION WITH PELI3</scope>
</reference>
<reference key="7">
    <citation type="journal article" date="2003" name="Oncogene">
        <title>NIK is a component of the EGF/heregulin receptor signaling complexes.</title>
        <authorList>
            <person name="Chen D."/>
            <person name="Xu L.G."/>
            <person name="Chen L."/>
            <person name="Li L."/>
            <person name="Zhai Z."/>
            <person name="Shu H.B."/>
        </authorList>
    </citation>
    <scope>INTERACTION WITH GRB10</scope>
</reference>
<reference key="8">
    <citation type="journal article" date="2004" name="J. Biol. Chem.">
        <title>Regulation of the NF-kappaB-inducing kinase by tumor necrosis factor receptor-associated factor 3-induced degradation.</title>
        <authorList>
            <person name="Liao G."/>
            <person name="Zhang M."/>
            <person name="Harhaj E.W."/>
            <person name="Sun S.C."/>
        </authorList>
    </citation>
    <scope>FUNCTION</scope>
    <scope>UBIQUITINATION</scope>
    <scope>INTERACTION WITH TRAF3</scope>
</reference>
<reference key="9">
    <citation type="journal article" date="2004" name="Proc. Natl. Acad. Sci. U.S.A.">
        <title>beta-Arrestin inhibits NF-kappaB activity by means of its interaction with the NF-kappaB inhibitor IkappaBalpha.</title>
        <authorList>
            <person name="Witherow D.S."/>
            <person name="Garrison T.R."/>
            <person name="Miller W.E."/>
            <person name="Lefkowitz R.J."/>
        </authorList>
    </citation>
    <scope>INTERACTION WITH ARRB1 AND ARRB2</scope>
</reference>
<reference key="10">
    <citation type="journal article" date="2005" name="J. Biol. Chem.">
        <title>NIBP, a novel NIK and IKK(beta)-binding protein that enhances NF-(kappa)B activation.</title>
        <authorList>
            <person name="Hu W.-H."/>
            <person name="Pendergast J.S."/>
            <person name="Mo X.-M."/>
            <person name="Brambilla R."/>
            <person name="Bracchi-Ricard V."/>
            <person name="Li F."/>
            <person name="Walters W.M."/>
            <person name="Blits B."/>
            <person name="He L."/>
            <person name="Schaal S.M."/>
            <person name="Bethea J.R."/>
        </authorList>
    </citation>
    <scope>INTERACTION WITH NIBP</scope>
</reference>
<reference key="11">
    <citation type="journal article" date="2007" name="J. Immunol.">
        <title>Monarch-1 suppresses non-canonical NF-kappaB activation and p52-dependent chemokine expression in monocytes.</title>
        <authorList>
            <person name="Lich J.D."/>
            <person name="Williams K.L."/>
            <person name="Moore C.B."/>
            <person name="Arthur J.C."/>
            <person name="Davis B.K."/>
            <person name="Taxman D.J."/>
            <person name="Ting J.P."/>
        </authorList>
    </citation>
    <scope>INTERACTION WITH NLRP12</scope>
</reference>
<reference key="12">
    <citation type="journal article" date="2010" name="Sci. Signal.">
        <title>Negative feedback in noncanonical NF-kappaB signaling modulates NIK stability through IKKalpha-mediated phosphorylation.</title>
        <authorList>
            <person name="Razani B."/>
            <person name="Zarnegar B."/>
            <person name="Ytterberg A.J."/>
            <person name="Shiba T."/>
            <person name="Dempsey P.W."/>
            <person name="Ware C.F."/>
            <person name="Loo J.A."/>
            <person name="Cheng G."/>
        </authorList>
    </citation>
    <scope>PHOSPHORYLATION BY CHUK/IKKA</scope>
</reference>
<reference key="13">
    <citation type="journal article" date="2018" name="Biochem. J.">
        <title>DDX3 directly facilitates IKKalpha activation and regulates downstream signalling pathways.</title>
        <authorList>
            <person name="Fullam A."/>
            <person name="Gu L."/>
            <person name="Hoehn Y."/>
            <person name="Schroeder M."/>
        </authorList>
    </citation>
    <scope>INTERACTION WITH DDX3X</scope>
</reference>
<reference key="14">
    <citation type="journal article" date="2012" name="J. Biol. Chem.">
        <title>Structure of the nuclear factor kappaB-inducing kinase (NIK) kinase domain reveals a constitutively active conformation.</title>
        <authorList>
            <person name="Liu J."/>
            <person name="Sudom A."/>
            <person name="Min X."/>
            <person name="Cao Z."/>
            <person name="Gao X."/>
            <person name="Ayres M."/>
            <person name="Lee F."/>
            <person name="Cao P."/>
            <person name="Johnstone S."/>
            <person name="Plotnikova O."/>
            <person name="Walker N."/>
            <person name="Chen G."/>
            <person name="Wang Z."/>
        </authorList>
    </citation>
    <scope>X-RAY CRYSTALLOGRAPHY (2.5 ANGSTROMS) OF 330-680</scope>
</reference>
<reference key="15">
    <citation type="journal article" date="2012" name="Structure">
        <title>The crystal structure of the catalytic domain of the NF-kappaB inducing kinase reveals a narrow but flexible active site.</title>
        <authorList>
            <person name="de Leon-Boenig G."/>
            <person name="Bowman K.K."/>
            <person name="Feng J.A."/>
            <person name="Crawford T."/>
            <person name="Everett C."/>
            <person name="Franke Y."/>
            <person name="Oh A."/>
            <person name="Stanley M."/>
            <person name="Staben S.T."/>
            <person name="Starovasnik M.A."/>
            <person name="Wallweber H.J."/>
            <person name="Wu J."/>
            <person name="Wu L.C."/>
            <person name="Johnson A.R."/>
            <person name="Hymowitz S.G."/>
        </authorList>
    </citation>
    <scope>X-RAY CRYSTALLOGRAPHY (2.9 ANGSTROMS) OF 308-673</scope>
</reference>
<reference key="16">
    <citation type="journal article" date="2007" name="Nature">
        <title>Patterns of somatic mutation in human cancer genomes.</title>
        <authorList>
            <person name="Greenman C."/>
            <person name="Stephens P."/>
            <person name="Smith R."/>
            <person name="Dalgliesh G.L."/>
            <person name="Hunter C."/>
            <person name="Bignell G."/>
            <person name="Davies H."/>
            <person name="Teague J."/>
            <person name="Butler A."/>
            <person name="Stevens C."/>
            <person name="Edkins S."/>
            <person name="O'Meara S."/>
            <person name="Vastrik I."/>
            <person name="Schmidt E.E."/>
            <person name="Avis T."/>
            <person name="Barthorpe S."/>
            <person name="Bhamra G."/>
            <person name="Buck G."/>
            <person name="Choudhury B."/>
            <person name="Clements J."/>
            <person name="Cole J."/>
            <person name="Dicks E."/>
            <person name="Forbes S."/>
            <person name="Gray K."/>
            <person name="Halliday K."/>
            <person name="Harrison R."/>
            <person name="Hills K."/>
            <person name="Hinton J."/>
            <person name="Jenkinson A."/>
            <person name="Jones D."/>
            <person name="Menzies A."/>
            <person name="Mironenko T."/>
            <person name="Perry J."/>
            <person name="Raine K."/>
            <person name="Richardson D."/>
            <person name="Shepherd R."/>
            <person name="Small A."/>
            <person name="Tofts C."/>
            <person name="Varian J."/>
            <person name="Webb T."/>
            <person name="West S."/>
            <person name="Widaa S."/>
            <person name="Yates A."/>
            <person name="Cahill D.P."/>
            <person name="Louis D.N."/>
            <person name="Goldstraw P."/>
            <person name="Nicholson A.G."/>
            <person name="Brasseur F."/>
            <person name="Looijenga L."/>
            <person name="Weber B.L."/>
            <person name="Chiew Y.-E."/>
            <person name="DeFazio A."/>
            <person name="Greaves M.F."/>
            <person name="Green A.R."/>
            <person name="Campbell P."/>
            <person name="Birney E."/>
            <person name="Easton D.F."/>
            <person name="Chenevix-Trench G."/>
            <person name="Tan M.-H."/>
            <person name="Khoo S.K."/>
            <person name="Teh B.T."/>
            <person name="Yuen S.T."/>
            <person name="Leung S.Y."/>
            <person name="Wooster R."/>
            <person name="Futreal P.A."/>
            <person name="Stratton M.R."/>
        </authorList>
    </citation>
    <scope>VARIANTS [LARGE SCALE ANALYSIS] ASN-140; LYS-514; ALA-764; ILE-852 AND HIS-928</scope>
</reference>
<reference key="17">
    <citation type="journal article" date="2010" name="J. Biol. Chem.">
        <title>An atypical E3 ligase zinc finger protein 91 stabilizes and activates NF-kappaB-inducing kinase via Lys63-linked ubiquitination.</title>
        <authorList>
            <person name="Jin X."/>
            <person name="Jin H.R."/>
            <person name="Jung H.S."/>
            <person name="Lee S.J."/>
            <person name="Lee J.H."/>
            <person name="Lee J.J."/>
        </authorList>
    </citation>
    <scope>PHOSPHORYLATION AT THR-559</scope>
    <scope>UBIQUITINATION</scope>
    <scope>INTERACTION WITH ZFP91</scope>
    <scope>MUTAGENESIS OF 429-LYS-LYS-430 AND THR-559</scope>
</reference>
<reference key="18">
    <citation type="journal article" date="2014" name="Nat. Commun.">
        <title>Biallelic loss-of-function mutation in NIK causes a primary immunodeficiency with multifaceted aberrant lymphoid immunity.</title>
        <authorList>
            <person name="Willmann K.L."/>
            <person name="Klaver S."/>
            <person name="Dogu F."/>
            <person name="Santos-Valente E."/>
            <person name="Garncarz W."/>
            <person name="Bilic I."/>
            <person name="Mace E."/>
            <person name="Salzer E."/>
            <person name="Conde C.D."/>
            <person name="Sic H."/>
            <person name="Majek P."/>
            <person name="Banerjee P.P."/>
            <person name="Vladimer G.I."/>
            <person name="Haskologlu S."/>
            <person name="Bolkent M.G."/>
            <person name="Kuepesiz A."/>
            <person name="Condino-Neto A."/>
            <person name="Colinge J."/>
            <person name="Superti-Furga G."/>
            <person name="Pickl W.F."/>
            <person name="van Zelm M.C."/>
            <person name="Eibel H."/>
            <person name="Orange J.S."/>
            <person name="Ikinciogullari A."/>
            <person name="Boztug K."/>
        </authorList>
    </citation>
    <scope>VARIANT IMD112 ARG-565</scope>
    <scope>CHARACTERIZATION OF VARIANT IMD112 ARG-565</scope>
    <scope>INVOLVEMENT IN IMD112</scope>
    <scope>FUNCTION</scope>
    <scope>MUTAGENESIS OF 429-LYS-LYS-430</scope>
</reference>
<reference key="19">
    <citation type="journal article" date="2017" name="Front. Immunol.">
        <title>Exome Sequencing Identifies a Novel MAP3K14 Mutation in Recessive Atypical Combined Immunodeficiency.</title>
        <authorList>
            <person name="Schlechter N."/>
            <person name="Glanzmann B."/>
            <person name="Hoal E.G."/>
            <person name="Schoeman M."/>
            <person name="Petersen B.S."/>
            <person name="Franke A."/>
            <person name="Lau Y.L."/>
            <person name="Urban M."/>
            <person name="van Helden P.D."/>
            <person name="Esser M.M."/>
            <person name="Moeller M."/>
            <person name="Kinnear C."/>
        </authorList>
    </citation>
    <scope>VARIANT IMD112 MET-345</scope>
    <scope>CHARACTERIZATION OF VARIANT IMD112 MET-345</scope>
    <scope>INVOLVEMENT IN IMD112</scope>
    <scope>FUNCTION</scope>
</reference>
<keyword id="KW-0002">3D-structure</keyword>
<keyword id="KW-0067">ATP-binding</keyword>
<keyword id="KW-0963">Cytoplasm</keyword>
<keyword id="KW-0225">Disease variant</keyword>
<keyword id="KW-0418">Kinase</keyword>
<keyword id="KW-0547">Nucleotide-binding</keyword>
<keyword id="KW-0597">Phosphoprotein</keyword>
<keyword id="KW-1267">Proteomics identification</keyword>
<keyword id="KW-1185">Reference proteome</keyword>
<keyword id="KW-0723">Serine/threonine-protein kinase</keyword>
<keyword id="KW-0808">Transferase</keyword>
<keyword id="KW-0832">Ubl conjugation</keyword>
<evidence type="ECO:0000250" key="1"/>
<evidence type="ECO:0000250" key="2">
    <source>
        <dbReference type="UniProtKB" id="Q9WUL6"/>
    </source>
</evidence>
<evidence type="ECO:0000255" key="3">
    <source>
        <dbReference type="PROSITE-ProRule" id="PRU00159"/>
    </source>
</evidence>
<evidence type="ECO:0000255" key="4">
    <source>
        <dbReference type="PROSITE-ProRule" id="PRU10027"/>
    </source>
</evidence>
<evidence type="ECO:0000256" key="5">
    <source>
        <dbReference type="SAM" id="MobiDB-lite"/>
    </source>
</evidence>
<evidence type="ECO:0000269" key="6">
    <source>
    </source>
</evidence>
<evidence type="ECO:0000269" key="7">
    <source>
    </source>
</evidence>
<evidence type="ECO:0000269" key="8">
    <source>
    </source>
</evidence>
<evidence type="ECO:0000269" key="9">
    <source>
    </source>
</evidence>
<evidence type="ECO:0000269" key="10">
    <source>
    </source>
</evidence>
<evidence type="ECO:0000269" key="11">
    <source>
    </source>
</evidence>
<evidence type="ECO:0000269" key="12">
    <source>
    </source>
</evidence>
<evidence type="ECO:0000269" key="13">
    <source>
    </source>
</evidence>
<evidence type="ECO:0000269" key="14">
    <source>
    </source>
</evidence>
<evidence type="ECO:0000269" key="15">
    <source>
    </source>
</evidence>
<evidence type="ECO:0000269" key="16">
    <source>
    </source>
</evidence>
<evidence type="ECO:0000269" key="17">
    <source>
    </source>
</evidence>
<evidence type="ECO:0000269" key="18">
    <source>
    </source>
</evidence>
<evidence type="ECO:0000303" key="19">
    <source>
    </source>
</evidence>
<evidence type="ECO:0000303" key="20">
    <source>
    </source>
</evidence>
<evidence type="ECO:0000305" key="21"/>
<evidence type="ECO:0000312" key="22">
    <source>
        <dbReference type="HGNC" id="HGNC:6853"/>
    </source>
</evidence>
<evidence type="ECO:0007829" key="23">
    <source>
        <dbReference type="PDB" id="4G3D"/>
    </source>
</evidence>
<evidence type="ECO:0007829" key="24">
    <source>
        <dbReference type="PDB" id="4IDT"/>
    </source>
</evidence>
<evidence type="ECO:0007829" key="25">
    <source>
        <dbReference type="PDB" id="4IDV"/>
    </source>
</evidence>
<organism>
    <name type="scientific">Homo sapiens</name>
    <name type="common">Human</name>
    <dbReference type="NCBI Taxonomy" id="9606"/>
    <lineage>
        <taxon>Eukaryota</taxon>
        <taxon>Metazoa</taxon>
        <taxon>Chordata</taxon>
        <taxon>Craniata</taxon>
        <taxon>Vertebrata</taxon>
        <taxon>Euteleostomi</taxon>
        <taxon>Mammalia</taxon>
        <taxon>Eutheria</taxon>
        <taxon>Euarchontoglires</taxon>
        <taxon>Primates</taxon>
        <taxon>Haplorrhini</taxon>
        <taxon>Catarrhini</taxon>
        <taxon>Hominidae</taxon>
        <taxon>Homo</taxon>
    </lineage>
</organism>
<accession>Q99558</accession>
<accession>A8K2D8</accession>
<accession>D3DX67</accession>
<accession>Q8IYN1</accession>
<gene>
    <name evidence="22" type="primary">MAP3K14</name>
    <name evidence="19" type="synonym">NIK</name>
</gene>
<proteinExistence type="evidence at protein level"/>
<dbReference type="EC" id="2.7.11.25"/>
<dbReference type="EMBL" id="Y10256">
    <property type="protein sequence ID" value="CAA71306.1"/>
    <property type="molecule type" value="mRNA"/>
</dbReference>
<dbReference type="EMBL" id="AK290203">
    <property type="protein sequence ID" value="BAF82892.1"/>
    <property type="molecule type" value="mRNA"/>
</dbReference>
<dbReference type="EMBL" id="DQ314874">
    <property type="protein sequence ID" value="ABC40733.1"/>
    <property type="molecule type" value="Genomic_DNA"/>
</dbReference>
<dbReference type="EMBL" id="CH471178">
    <property type="protein sequence ID" value="EAW51529.1"/>
    <property type="molecule type" value="Genomic_DNA"/>
</dbReference>
<dbReference type="EMBL" id="CH471178">
    <property type="protein sequence ID" value="EAW51530.1"/>
    <property type="molecule type" value="Genomic_DNA"/>
</dbReference>
<dbReference type="EMBL" id="BC035576">
    <property type="protein sequence ID" value="AAH35576.1"/>
    <property type="molecule type" value="mRNA"/>
</dbReference>
<dbReference type="CCDS" id="CCDS74079.1"/>
<dbReference type="RefSeq" id="NP_003945.2">
    <property type="nucleotide sequence ID" value="NM_003954.5"/>
</dbReference>
<dbReference type="RefSeq" id="XP_011523743.1">
    <property type="nucleotide sequence ID" value="XM_011525441.3"/>
</dbReference>
<dbReference type="RefSeq" id="XP_054173660.1">
    <property type="nucleotide sequence ID" value="XM_054317685.1"/>
</dbReference>
<dbReference type="PDB" id="4DN5">
    <property type="method" value="X-ray"/>
    <property type="resolution" value="2.50 A"/>
    <property type="chains" value="A/B=330-680"/>
</dbReference>
<dbReference type="PDB" id="4G3D">
    <property type="method" value="X-ray"/>
    <property type="resolution" value="2.90 A"/>
    <property type="chains" value="A/B/D/E=308-673"/>
</dbReference>
<dbReference type="PDB" id="4IDT">
    <property type="method" value="X-ray"/>
    <property type="resolution" value="2.40 A"/>
    <property type="chains" value="A/B=330-680"/>
</dbReference>
<dbReference type="PDB" id="4IDV">
    <property type="method" value="X-ray"/>
    <property type="resolution" value="2.90 A"/>
    <property type="chains" value="A/B/C/D=330-680"/>
</dbReference>
<dbReference type="PDB" id="6WPP">
    <property type="method" value="X-ray"/>
    <property type="resolution" value="2.55 A"/>
    <property type="chains" value="A/B=343-686"/>
</dbReference>
<dbReference type="PDB" id="6Z1Q">
    <property type="method" value="X-ray"/>
    <property type="resolution" value="2.42 A"/>
    <property type="chains" value="AAA/BBB=330-680"/>
</dbReference>
<dbReference type="PDB" id="6Z1T">
    <property type="method" value="X-ray"/>
    <property type="resolution" value="2.31 A"/>
    <property type="chains" value="AAA/BBB=330-680"/>
</dbReference>
<dbReference type="PDB" id="8YHW">
    <property type="method" value="X-ray"/>
    <property type="resolution" value="2.90 A"/>
    <property type="chains" value="A/B/C/D=330-679"/>
</dbReference>
<dbReference type="PDBsum" id="4DN5"/>
<dbReference type="PDBsum" id="4G3D"/>
<dbReference type="PDBsum" id="4IDT"/>
<dbReference type="PDBsum" id="4IDV"/>
<dbReference type="PDBsum" id="6WPP"/>
<dbReference type="PDBsum" id="6Z1Q"/>
<dbReference type="PDBsum" id="6Z1T"/>
<dbReference type="PDBsum" id="8YHW"/>
<dbReference type="SMR" id="Q99558"/>
<dbReference type="BioGRID" id="114487">
    <property type="interactions" value="173"/>
</dbReference>
<dbReference type="CORUM" id="Q99558"/>
<dbReference type="DIP" id="DIP-27522N"/>
<dbReference type="FunCoup" id="Q99558">
    <property type="interactions" value="3346"/>
</dbReference>
<dbReference type="IntAct" id="Q99558">
    <property type="interactions" value="151"/>
</dbReference>
<dbReference type="MINT" id="Q99558"/>
<dbReference type="STRING" id="9606.ENSP00000482657"/>
<dbReference type="BindingDB" id="Q99558"/>
<dbReference type="ChEMBL" id="CHEMBL5888"/>
<dbReference type="GuidetoPHARMACOLOGY" id="2074"/>
<dbReference type="GlyGen" id="Q99558">
    <property type="glycosylation" value="1 site, 1 O-linked glycan (1 site)"/>
</dbReference>
<dbReference type="iPTMnet" id="Q99558"/>
<dbReference type="PhosphoSitePlus" id="Q99558"/>
<dbReference type="BioMuta" id="MAP3K14"/>
<dbReference type="DMDM" id="92090612"/>
<dbReference type="CPTAC" id="non-CPTAC-5641"/>
<dbReference type="jPOST" id="Q99558"/>
<dbReference type="MassIVE" id="Q99558"/>
<dbReference type="PaxDb" id="9606-ENSP00000482657"/>
<dbReference type="PeptideAtlas" id="Q99558"/>
<dbReference type="ProteomicsDB" id="78326"/>
<dbReference type="Antibodypedia" id="3862">
    <property type="antibodies" value="358 antibodies from 41 providers"/>
</dbReference>
<dbReference type="DNASU" id="9020"/>
<dbReference type="Ensembl" id="ENST00000344686.8">
    <property type="protein sequence ID" value="ENSP00000478552.1"/>
    <property type="gene ID" value="ENSG00000006062.18"/>
</dbReference>
<dbReference type="Ensembl" id="ENST00000376926.8">
    <property type="protein sequence ID" value="ENSP00000482657.1"/>
    <property type="gene ID" value="ENSG00000006062.18"/>
</dbReference>
<dbReference type="Ensembl" id="ENST00000617331.3">
    <property type="protein sequence ID" value="ENSP00000480974.3"/>
    <property type="gene ID" value="ENSG00000006062.18"/>
</dbReference>
<dbReference type="GeneID" id="9020"/>
<dbReference type="KEGG" id="hsa:9020"/>
<dbReference type="MANE-Select" id="ENST00000344686.8">
    <property type="protein sequence ID" value="ENSP00000478552.1"/>
    <property type="RefSeq nucleotide sequence ID" value="NM_003954.5"/>
    <property type="RefSeq protein sequence ID" value="NP_003945.2"/>
</dbReference>
<dbReference type="UCSC" id="uc032fjy.2">
    <property type="organism name" value="human"/>
</dbReference>
<dbReference type="AGR" id="HGNC:6853"/>
<dbReference type="CTD" id="9020"/>
<dbReference type="DisGeNET" id="9020"/>
<dbReference type="GeneCards" id="MAP3K14"/>
<dbReference type="HGNC" id="HGNC:6853">
    <property type="gene designation" value="MAP3K14"/>
</dbReference>
<dbReference type="HPA" id="ENSG00000006062">
    <property type="expression patterns" value="Low tissue specificity"/>
</dbReference>
<dbReference type="MalaCards" id="MAP3K14"/>
<dbReference type="MIM" id="604655">
    <property type="type" value="gene"/>
</dbReference>
<dbReference type="MIM" id="620449">
    <property type="type" value="phenotype"/>
</dbReference>
<dbReference type="neXtProt" id="NX_Q99558"/>
<dbReference type="OpenTargets" id="ENSG00000006062"/>
<dbReference type="Orphanet" id="447731">
    <property type="disease" value="NIK deficiency"/>
</dbReference>
<dbReference type="PharmGKB" id="PA30597"/>
<dbReference type="VEuPathDB" id="HostDB:ENSG00000006062"/>
<dbReference type="eggNOG" id="KOG0198">
    <property type="taxonomic scope" value="Eukaryota"/>
</dbReference>
<dbReference type="GeneTree" id="ENSGT00940000156497"/>
<dbReference type="HOGENOM" id="CLU_010641_1_0_1"/>
<dbReference type="InParanoid" id="Q99558"/>
<dbReference type="OMA" id="IDIWSSC"/>
<dbReference type="OrthoDB" id="5836549at2759"/>
<dbReference type="PAN-GO" id="Q99558">
    <property type="GO annotations" value="5 GO annotations based on evolutionary models"/>
</dbReference>
<dbReference type="PhylomeDB" id="Q99558"/>
<dbReference type="PathwayCommons" id="Q99558"/>
<dbReference type="Reactome" id="R-HSA-389357">
    <property type="pathway name" value="CD28 dependent PI3K/Akt signaling"/>
</dbReference>
<dbReference type="Reactome" id="R-HSA-5607761">
    <property type="pathway name" value="Dectin-1 mediated noncanonical NF-kB signaling"/>
</dbReference>
<dbReference type="Reactome" id="R-HSA-5668541">
    <property type="pathway name" value="TNFR2 non-canonical NF-kB pathway"/>
</dbReference>
<dbReference type="Reactome" id="R-HSA-5676590">
    <property type="pathway name" value="NIK--&gt;noncanonical NF-kB signaling"/>
</dbReference>
<dbReference type="Reactome" id="R-HSA-5676594">
    <property type="pathway name" value="TNF receptor superfamily (TNFSF) members mediating non-canonical NF-kB pathway"/>
</dbReference>
<dbReference type="SignaLink" id="Q99558"/>
<dbReference type="SIGNOR" id="Q99558"/>
<dbReference type="BioGRID-ORCS" id="9020">
    <property type="hits" value="10 hits in 303 CRISPR screens"/>
</dbReference>
<dbReference type="ChiTaRS" id="MAP3K14">
    <property type="organism name" value="human"/>
</dbReference>
<dbReference type="EvolutionaryTrace" id="Q99558"/>
<dbReference type="GeneWiki" id="MAP3K14"/>
<dbReference type="GenomeRNAi" id="9020"/>
<dbReference type="Pharos" id="Q99558">
    <property type="development level" value="Tchem"/>
</dbReference>
<dbReference type="PRO" id="PR:Q99558"/>
<dbReference type="Proteomes" id="UP000005640">
    <property type="component" value="Chromosome 17"/>
</dbReference>
<dbReference type="RNAct" id="Q99558">
    <property type="molecule type" value="protein"/>
</dbReference>
<dbReference type="Bgee" id="ENSG00000006062">
    <property type="expression patterns" value="Expressed in granulocyte and 110 other cell types or tissues"/>
</dbReference>
<dbReference type="ExpressionAtlas" id="Q99558">
    <property type="expression patterns" value="baseline and differential"/>
</dbReference>
<dbReference type="GO" id="GO:0005829">
    <property type="term" value="C:cytosol"/>
    <property type="evidence" value="ECO:0000314"/>
    <property type="project" value="HPA"/>
</dbReference>
<dbReference type="GO" id="GO:0001650">
    <property type="term" value="C:fibrillar center"/>
    <property type="evidence" value="ECO:0000314"/>
    <property type="project" value="HPA"/>
</dbReference>
<dbReference type="GO" id="GO:0043231">
    <property type="term" value="C:intracellular membrane-bounded organelle"/>
    <property type="evidence" value="ECO:0000314"/>
    <property type="project" value="HPA"/>
</dbReference>
<dbReference type="GO" id="GO:0005654">
    <property type="term" value="C:nucleoplasm"/>
    <property type="evidence" value="ECO:0000314"/>
    <property type="project" value="HPA"/>
</dbReference>
<dbReference type="GO" id="GO:0005524">
    <property type="term" value="F:ATP binding"/>
    <property type="evidence" value="ECO:0007669"/>
    <property type="project" value="UniProtKB-KW"/>
</dbReference>
<dbReference type="GO" id="GO:0004709">
    <property type="term" value="F:MAP kinase kinase kinase activity"/>
    <property type="evidence" value="ECO:0007669"/>
    <property type="project" value="UniProtKB-EC"/>
</dbReference>
<dbReference type="GO" id="GO:0004672">
    <property type="term" value="F:protein kinase activity"/>
    <property type="evidence" value="ECO:0000314"/>
    <property type="project" value="MGI"/>
</dbReference>
<dbReference type="GO" id="GO:0106310">
    <property type="term" value="F:protein serine kinase activity"/>
    <property type="evidence" value="ECO:0007669"/>
    <property type="project" value="RHEA"/>
</dbReference>
<dbReference type="GO" id="GO:0004674">
    <property type="term" value="F:protein serine/threonine kinase activity"/>
    <property type="evidence" value="ECO:0000269"/>
    <property type="project" value="Reactome"/>
</dbReference>
<dbReference type="GO" id="GO:0071260">
    <property type="term" value="P:cellular response to mechanical stimulus"/>
    <property type="evidence" value="ECO:0000270"/>
    <property type="project" value="UniProtKB"/>
</dbReference>
<dbReference type="GO" id="GO:0051607">
    <property type="term" value="P:defense response to virus"/>
    <property type="evidence" value="ECO:0000314"/>
    <property type="project" value="UniProtKB"/>
</dbReference>
<dbReference type="GO" id="GO:0006955">
    <property type="term" value="P:immune response"/>
    <property type="evidence" value="ECO:0000250"/>
    <property type="project" value="UniProtKB"/>
</dbReference>
<dbReference type="GO" id="GO:0000165">
    <property type="term" value="P:MAPK cascade"/>
    <property type="evidence" value="ECO:0000318"/>
    <property type="project" value="GO_Central"/>
</dbReference>
<dbReference type="GO" id="GO:0038061">
    <property type="term" value="P:non-canonical NF-kappaB signal transduction"/>
    <property type="evidence" value="ECO:0000315"/>
    <property type="project" value="UniProtKB"/>
</dbReference>
<dbReference type="CDD" id="cd13991">
    <property type="entry name" value="STKc_NIK"/>
    <property type="match status" value="1"/>
</dbReference>
<dbReference type="FunFam" id="1.10.510.10:FF:000383">
    <property type="entry name" value="Mitogen-activated protein kinase kinase kinase 14"/>
    <property type="match status" value="1"/>
</dbReference>
<dbReference type="FunFam" id="3.30.200.20:FF:000326">
    <property type="entry name" value="Mitogen-activated protein kinase kinase kinase 14"/>
    <property type="match status" value="1"/>
</dbReference>
<dbReference type="Gene3D" id="3.30.200.20">
    <property type="entry name" value="Phosphorylase Kinase, domain 1"/>
    <property type="match status" value="1"/>
</dbReference>
<dbReference type="Gene3D" id="1.10.510.10">
    <property type="entry name" value="Transferase(Phosphotransferase) domain 1"/>
    <property type="match status" value="1"/>
</dbReference>
<dbReference type="InterPro" id="IPR011009">
    <property type="entry name" value="Kinase-like_dom_sf"/>
</dbReference>
<dbReference type="InterPro" id="IPR042787">
    <property type="entry name" value="M3K14_STKc"/>
</dbReference>
<dbReference type="InterPro" id="IPR050538">
    <property type="entry name" value="MAP_kinase_kinase_kinase"/>
</dbReference>
<dbReference type="InterPro" id="IPR017425">
    <property type="entry name" value="MAPKKK14"/>
</dbReference>
<dbReference type="InterPro" id="IPR000719">
    <property type="entry name" value="Prot_kinase_dom"/>
</dbReference>
<dbReference type="InterPro" id="IPR017441">
    <property type="entry name" value="Protein_kinase_ATP_BS"/>
</dbReference>
<dbReference type="InterPro" id="IPR008271">
    <property type="entry name" value="Ser/Thr_kinase_AS"/>
</dbReference>
<dbReference type="PANTHER" id="PTHR48016">
    <property type="entry name" value="MAP KINASE KINASE KINASE SSK2-RELATED-RELATED"/>
    <property type="match status" value="1"/>
</dbReference>
<dbReference type="PANTHER" id="PTHR48016:SF9">
    <property type="entry name" value="MITOGEN-ACTIVATED PROTEIN KINASE KINASE KINASE 14"/>
    <property type="match status" value="1"/>
</dbReference>
<dbReference type="Pfam" id="PF00069">
    <property type="entry name" value="Pkinase"/>
    <property type="match status" value="1"/>
</dbReference>
<dbReference type="PIRSF" id="PIRSF038175">
    <property type="entry name" value="MAPKKK14"/>
    <property type="match status" value="1"/>
</dbReference>
<dbReference type="SMART" id="SM00220">
    <property type="entry name" value="S_TKc"/>
    <property type="match status" value="1"/>
</dbReference>
<dbReference type="SUPFAM" id="SSF56112">
    <property type="entry name" value="Protein kinase-like (PK-like)"/>
    <property type="match status" value="1"/>
</dbReference>
<dbReference type="PROSITE" id="PS00107">
    <property type="entry name" value="PROTEIN_KINASE_ATP"/>
    <property type="match status" value="1"/>
</dbReference>
<dbReference type="PROSITE" id="PS50011">
    <property type="entry name" value="PROTEIN_KINASE_DOM"/>
    <property type="match status" value="1"/>
</dbReference>
<dbReference type="PROSITE" id="PS00108">
    <property type="entry name" value="PROTEIN_KINASE_ST"/>
    <property type="match status" value="1"/>
</dbReference>
<comment type="function">
    <text evidence="8 15">Lymphotoxin beta-activated kinase which seems to be exclusively involved in the activation of NF-kappa-B and its transcriptional activity. Phosphorylates CHUK/IKKA, thereby promoting proteolytic processing of NFKB2/P100, which leads to NF-kappa-B activation via the non-canonical pathway (PubMed:25406581, PubMed:29230214). Has an essential role in the non-canonical NF-kappa-B signaling that regulates genes encoding molecules involved in B-cell survival, lymphoid organogenesis, and immune response (PubMed:25406581). Could act in a receptor-selective manner.</text>
</comment>
<comment type="catalytic activity">
    <reaction>
        <text>L-seryl-[protein] + ATP = O-phospho-L-seryl-[protein] + ADP + H(+)</text>
        <dbReference type="Rhea" id="RHEA:17989"/>
        <dbReference type="Rhea" id="RHEA-COMP:9863"/>
        <dbReference type="Rhea" id="RHEA-COMP:11604"/>
        <dbReference type="ChEBI" id="CHEBI:15378"/>
        <dbReference type="ChEBI" id="CHEBI:29999"/>
        <dbReference type="ChEBI" id="CHEBI:30616"/>
        <dbReference type="ChEBI" id="CHEBI:83421"/>
        <dbReference type="ChEBI" id="CHEBI:456216"/>
        <dbReference type="EC" id="2.7.11.25"/>
    </reaction>
</comment>
<comment type="catalytic activity">
    <reaction>
        <text>L-threonyl-[protein] + ATP = O-phospho-L-threonyl-[protein] + ADP + H(+)</text>
        <dbReference type="Rhea" id="RHEA:46608"/>
        <dbReference type="Rhea" id="RHEA-COMP:11060"/>
        <dbReference type="Rhea" id="RHEA-COMP:11605"/>
        <dbReference type="ChEBI" id="CHEBI:15378"/>
        <dbReference type="ChEBI" id="CHEBI:30013"/>
        <dbReference type="ChEBI" id="CHEBI:30616"/>
        <dbReference type="ChEBI" id="CHEBI:61977"/>
        <dbReference type="ChEBI" id="CHEBI:456216"/>
        <dbReference type="EC" id="2.7.11.25"/>
    </reaction>
</comment>
<comment type="subunit">
    <text evidence="1 2 6 7 8 9 10 11 14 17">Interacts with TRAF2, TRAF5, TRAF6, IKKA and NFKB2/P100 (By similarity). Interacts with TRAF3 and PELI3. Interacts with NIBP; the interaction is direct. Interacts with ARRB1 and ARRB2. Interacts with GRB10. Interacts with ZFP91. Interacts with NLRP12; this interaction promotes proteasomal degradation of MAP3K14. Directly interacts with DDX3X (PubMed:30341167). Interacts (via C-terminus and kinase domain) with PPPC3A (via N-terminus) and PPP3CB (By similarity).</text>
</comment>
<comment type="interaction">
    <interactant intactId="EBI-358011">
        <id>Q99558</id>
    </interactant>
    <interactant intactId="EBI-295634">
        <id>Q16543</id>
        <label>CDC37</label>
    </interactant>
    <organismsDiffer>false</organismsDiffer>
    <experiments>6</experiments>
</comment>
<comment type="interaction">
    <interactant intactId="EBI-358011">
        <id>Q99558</id>
    </interactant>
    <interactant intactId="EBI-81249">
        <id>O15111</id>
        <label>CHUK</label>
    </interactant>
    <organismsDiffer>false</organismsDiffer>
    <experiments>13</experiments>
</comment>
<comment type="interaction">
    <interactant intactId="EBI-358011">
        <id>Q99558</id>
    </interactant>
    <interactant intactId="EBI-350145">
        <id>P01112</id>
        <label>HRAS</label>
    </interactant>
    <organismsDiffer>false</organismsDiffer>
    <experiments>3</experiments>
</comment>
<comment type="interaction">
    <interactant intactId="EBI-358011">
        <id>Q99558</id>
    </interactant>
    <interactant intactId="EBI-296047">
        <id>P07900</id>
        <label>HSP90AA1</label>
    </interactant>
    <organismsDiffer>false</organismsDiffer>
    <experiments>5</experiments>
</comment>
<comment type="interaction">
    <interactant intactId="EBI-358011">
        <id>Q99558</id>
    </interactant>
    <interactant intactId="EBI-352572">
        <id>P08238</id>
        <label>HSP90AB1</label>
    </interactant>
    <organismsDiffer>false</organismsDiffer>
    <experiments>5</experiments>
</comment>
<comment type="interaction">
    <interactant intactId="EBI-358011">
        <id>Q99558</id>
    </interactant>
    <interactant intactId="EBI-81266">
        <id>O14920</id>
        <label>IKBKB</label>
    </interactant>
    <organismsDiffer>false</organismsDiffer>
    <experiments>7</experiments>
</comment>
<comment type="interaction">
    <interactant intactId="EBI-358011">
        <id>Q99558</id>
    </interactant>
    <interactant intactId="EBI-81279">
        <id>Q9Y6K9</id>
        <label>IKBKG</label>
    </interactant>
    <organismsDiffer>false</organismsDiffer>
    <experiments>5</experiments>
</comment>
<comment type="interaction">
    <interactant intactId="EBI-358011">
        <id>Q99558</id>
    </interactant>
    <interactant intactId="EBI-286758">
        <id>Q14974</id>
        <label>KPNB1</label>
    </interactant>
    <organismsDiffer>false</organismsDiffer>
    <experiments>2</experiments>
</comment>
<comment type="interaction">
    <interactant intactId="EBI-358011">
        <id>Q99558</id>
    </interactant>
    <interactant intactId="EBI-348313">
        <id>P36578</id>
        <label>RPL4</label>
    </interactant>
    <organismsDiffer>false</organismsDiffer>
    <experiments>3</experiments>
</comment>
<comment type="interaction">
    <interactant intactId="EBI-358011">
        <id>Q99558</id>
    </interactant>
    <interactant intactId="EBI-359655">
        <id>Q02878</id>
        <label>RPL6</label>
    </interactant>
    <organismsDiffer>false</organismsDiffer>
    <experiments>3</experiments>
</comment>
<comment type="interaction">
    <interactant intactId="EBI-358011">
        <id>Q99558</id>
    </interactant>
    <interactant intactId="EBI-438527">
        <id>P62917</id>
        <label>RPL8</label>
    </interactant>
    <organismsDiffer>false</organismsDiffer>
    <experiments>3</experiments>
</comment>
<comment type="interaction">
    <interactant intactId="EBI-358011">
        <id>Q99558</id>
    </interactant>
    <interactant intactId="EBI-1047710">
        <id>P62280</id>
        <label>RPS11</label>
    </interactant>
    <organismsDiffer>false</organismsDiffer>
    <experiments>3</experiments>
</comment>
<comment type="interaction">
    <interactant intactId="EBI-358011">
        <id>Q99558</id>
    </interactant>
    <interactant intactId="EBI-351850">
        <id>P62277</id>
        <label>RPS13</label>
    </interactant>
    <organismsDiffer>false</organismsDiffer>
    <experiments>3</experiments>
</comment>
<comment type="interaction">
    <interactant intactId="EBI-358011">
        <id>Q99558</id>
    </interactant>
    <interactant intactId="EBI-355744">
        <id>Q12933</id>
        <label>TRAF2</label>
    </interactant>
    <organismsDiffer>false</organismsDiffer>
    <experiments>9</experiments>
</comment>
<comment type="interaction">
    <interactant intactId="EBI-358011">
        <id>Q99558</id>
    </interactant>
    <interactant intactId="EBI-357631">
        <id>Q13114</id>
        <label>TRAF3</label>
    </interactant>
    <organismsDiffer>false</organismsDiffer>
    <experiments>9</experiments>
</comment>
<comment type="interaction">
    <interactant intactId="EBI-358011">
        <id>Q99558</id>
    </interactant>
    <interactant intactId="EBI-356498">
        <id>P62258</id>
        <label>YWHAE</label>
    </interactant>
    <organismsDiffer>false</organismsDiffer>
    <experiments>2</experiments>
</comment>
<comment type="interaction">
    <interactant intactId="EBI-358011">
        <id>Q99558</id>
    </interactant>
    <interactant intactId="EBI-646264">
        <id>Q60680-2</id>
        <label>Chuk</label>
    </interactant>
    <organismsDiffer>true</organismsDiffer>
    <experiments>3</experiments>
</comment>
<comment type="subcellular location">
    <subcellularLocation>
        <location>Cytoplasm</location>
    </subcellularLocation>
</comment>
<comment type="tissue specificity">
    <text evidence="18">Weakly expressed in testis, small intestine, spleen, thymus, peripheral blood leukocytes, prostate, ovary and colon.</text>
</comment>
<comment type="PTM">
    <text evidence="13 14">Autophosphorylated. Phosphorylation at Thr-559 is required to activate its kinase activity and 'Lys-63'-linked polyubiquitination. Phosphorylated by CHUK/IKKA leading to MAP3K14 destabilization.</text>
</comment>
<comment type="PTM">
    <text>Ubiquitinated. Undergoes both 'Lys-48'- and 'Lys-63'-linked polyubiquitination. 'Lys-48'-linked polyubiquitination leads to its degradation by the proteasome, while 'Lys-63'-linked polyubiquitination stabilizes and activates it.</text>
</comment>
<comment type="disease" evidence="15 16">
    <disease id="DI-06724">
        <name>Immunodeficiency 112</name>
        <acronym>IMD112</acronym>
        <description>An autosomal recessive, primary immunologic disorder characterized by variable abnormalities affecting lymphoid immunity, including hypogammaglobulinemia, lymphopenia or paradoxical lymphocytosis, and recurrent bacterial, viral, and fungal infections.</description>
        <dbReference type="MIM" id="620449"/>
    </disease>
    <text>The disease is caused by variants affecting the gene represented in this entry.</text>
</comment>
<comment type="similarity">
    <text evidence="21">Belongs to the protein kinase superfamily. STE Ser/Thr protein kinase family. MAP kinase kinase kinase subfamily.</text>
</comment>
<sequence length="947" mass="104042">MAVMEMACPGAPGSAVGQQKELPKAKEKTPPLGKKQSSVYKLEAVEKSPVFCGKWEILNDVITKGTAKEGSEAGPAAISIIAQAECENSQEFSPTFSERIFIAGSKQYSQSESLDQIPNNVAHATEGKMARVCWKGKRRSKARKKRKKKSSKSLAHAGVALAKPLPRTPEQESCTIPVQEDESPLGAPYVRNTPQFTKPLKEPGLGQLCFKQLGEGLRPALPRSELHKLISPLQCLNHVWKLHHPQDGGPLPLPTHPFPYSRLPHPFPFHPLQPWKPHPLESFLGKLACVDSQKPLPDPHLSKLACVDSPKPLPGPHLEPSCLSRGAHEKFSVEEYLVHALQGSVSSGQAHSLTSLAKTWAARGSRSREPSPKTEDNEGVLLTEKLKPVDYEYREEVHWATHQLRLGRGSFGEVHRMEDKQTGFQCAVKKVRLEVFRAEELMACAGLTSPRIVPLYGAVREGPWVNIFMELLEGGSLGQLVKEQGCLPEDRALYYLGQALEGLEYLHSRRILHGDVKADNVLLSSDGSHAALCDFGHAVCLQPDGLGKSLLTGDYIPGTETHMAPEVVLGRSCDAKVDVWSSCCMMLHMLNGCHPWTQFFRGPLCLKIASEPPPVREIPPSCAPLTAQAIQEGLRKEPIHRVSAAELGGKVNRALQQVGGLKSPWRGEYKEPRHPPPNQANYHQTLHAQPRELSPRAPGPRPAEETTGRAPKLQPPLPPEPPEPNKSPPLTLSKEESGMWEPLPLSSLEPAPARNPSSPERKATVPEQELQQLEIELFLNSLSQPFSLEEQEQILSCLSIDSLSLSDDSEKNPSKASQSSRDTLSSGVHSWSSQAEARSSSWNMVLARGRPTDTPSYFNGVKVQIQSLNGEHLHIREFHRVKVGDIATGISSQIPAAAFSLVTKDGQPVRYDMEVPDSGIDLQCTLAPDGSFAWSWRVKHGQLENRP</sequence>
<protein>
    <recommendedName>
        <fullName evidence="22">Mitogen-activated protein kinase kinase kinase 14</fullName>
        <ecNumber>2.7.11.25</ecNumber>
    </recommendedName>
    <alternativeName>
        <fullName evidence="19">NF-kappa-beta-inducing kinase</fullName>
        <shortName evidence="22">HsNIK</shortName>
    </alternativeName>
    <alternativeName>
        <fullName evidence="20">Serine/threonine-protein kinase NIK</fullName>
    </alternativeName>
</protein>